<accession>B4SZ85</accession>
<feature type="chain" id="PRO_1000186050" description="Fatty acid oxidation complex subunit alpha">
    <location>
        <begin position="1"/>
        <end position="729"/>
    </location>
</feature>
<feature type="region of interest" description="Enoyl-CoA hydratase/isomerase" evidence="1">
    <location>
        <begin position="1"/>
        <end position="189"/>
    </location>
</feature>
<feature type="region of interest" description="3-hydroxyacyl-CoA dehydrogenase" evidence="1">
    <location>
        <begin position="311"/>
        <end position="729"/>
    </location>
</feature>
<feature type="region of interest" description="Disordered" evidence="2">
    <location>
        <begin position="708"/>
        <end position="729"/>
    </location>
</feature>
<feature type="active site" description="For 3-hydroxyacyl-CoA dehydrogenase activity" evidence="1">
    <location>
        <position position="450"/>
    </location>
</feature>
<feature type="binding site" evidence="1">
    <location>
        <position position="296"/>
    </location>
    <ligand>
        <name>substrate</name>
    </ligand>
</feature>
<feature type="binding site" evidence="1">
    <location>
        <position position="324"/>
    </location>
    <ligand>
        <name>NAD(+)</name>
        <dbReference type="ChEBI" id="CHEBI:57540"/>
    </ligand>
</feature>
<feature type="binding site" evidence="1">
    <location>
        <position position="343"/>
    </location>
    <ligand>
        <name>NAD(+)</name>
        <dbReference type="ChEBI" id="CHEBI:57540"/>
    </ligand>
</feature>
<feature type="binding site" evidence="1">
    <location>
        <begin position="400"/>
        <end position="402"/>
    </location>
    <ligand>
        <name>NAD(+)</name>
        <dbReference type="ChEBI" id="CHEBI:57540"/>
    </ligand>
</feature>
<feature type="binding site" evidence="1">
    <location>
        <position position="407"/>
    </location>
    <ligand>
        <name>NAD(+)</name>
        <dbReference type="ChEBI" id="CHEBI:57540"/>
    </ligand>
</feature>
<feature type="binding site" evidence="1">
    <location>
        <position position="429"/>
    </location>
    <ligand>
        <name>NAD(+)</name>
        <dbReference type="ChEBI" id="CHEBI:57540"/>
    </ligand>
</feature>
<feature type="binding site" evidence="1">
    <location>
        <position position="453"/>
    </location>
    <ligand>
        <name>NAD(+)</name>
        <dbReference type="ChEBI" id="CHEBI:57540"/>
    </ligand>
</feature>
<feature type="binding site" evidence="1">
    <location>
        <position position="500"/>
    </location>
    <ligand>
        <name>substrate</name>
    </ligand>
</feature>
<feature type="binding site" evidence="1">
    <location>
        <position position="660"/>
    </location>
    <ligand>
        <name>substrate</name>
    </ligand>
</feature>
<feature type="site" description="Important for catalytic activity" evidence="1">
    <location>
        <position position="119"/>
    </location>
</feature>
<feature type="site" description="Important for catalytic activity" evidence="1">
    <location>
        <position position="139"/>
    </location>
</feature>
<sequence length="729" mass="79543">MLYKGDTLYLDWLEDGIAELVFDAPGSVNKLDTATVASLGQALEVLEKQHDLKGLLLRSNKAAFIVGADITEFLSLFLVPEEQLSQWLHFANSVFNRLEDLPVPTLAAVNGYALGGGCECVLATDYRLATPDLRIGLPETKLGIMPGFGGSVRLPRMLGADSALEIIAAGKDVGAEHALKIGLVDGVVKQETLIEGAIAVLRQAITGDLDWRAKRQPKLEPLKLSKIEAAMSFTIAKGMVAQTAGKHYPAPMTAVKTIEAAARFGREEALNLENKSFVPLAHTNEARALVGIFLNDQYVKGKAKKLTKDIETPKQAAVLGAGIMGGGIAYQSAWKGVPVIMKDINDKSLNLGMTEAAKLLNKQLERGKIDGLKLAGVISTIHPTLDYAGFDRVDVVVEAVVENPKVKKAVLAETEQKVRPETVLASNTSTIPIGELASALEHPENFCGMHFFNPVHRMPLVEIIRGEKSSDETIAKVVAWASKMGKTPIVVNDCPGFFVNRVLFPYFAGFSQLLRDGADFRKVDKVMEKQFGWPMGPAYLLDVVGIDTAHHAQAVMAAGFPQRMQKEYRDAIDALFDASRFGQKNGLGFWRYKEDSKGKPKKEEDAAVDDLLASVSQPKHDFSDDEIIARMMIPMINEVVRCLEEGIIASPAEADMALVYGLGFPPFHGGAFRWLDTQGSAKYLDMAQQYQHLGPLYEVPEGLRNKARHNEPYYPPVEPARPVGSLKTA</sequence>
<name>FADB_SALNS</name>
<keyword id="KW-0276">Fatty acid metabolism</keyword>
<keyword id="KW-0413">Isomerase</keyword>
<keyword id="KW-0442">Lipid degradation</keyword>
<keyword id="KW-0443">Lipid metabolism</keyword>
<keyword id="KW-0456">Lyase</keyword>
<keyword id="KW-0511">Multifunctional enzyme</keyword>
<keyword id="KW-0520">NAD</keyword>
<keyword id="KW-0560">Oxidoreductase</keyword>
<dbReference type="EC" id="4.2.1.17" evidence="1"/>
<dbReference type="EC" id="5.1.2.3" evidence="1"/>
<dbReference type="EC" id="5.3.3.8" evidence="1"/>
<dbReference type="EC" id="1.1.1.35" evidence="1"/>
<dbReference type="EMBL" id="CP001113">
    <property type="protein sequence ID" value="ACF64230.1"/>
    <property type="molecule type" value="Genomic_DNA"/>
</dbReference>
<dbReference type="RefSeq" id="WP_000966011.1">
    <property type="nucleotide sequence ID" value="NZ_CCMR01000001.1"/>
</dbReference>
<dbReference type="SMR" id="B4SZ85"/>
<dbReference type="KEGG" id="see:SNSL254_A4262"/>
<dbReference type="HOGENOM" id="CLU_009834_16_3_6"/>
<dbReference type="UniPathway" id="UPA00659"/>
<dbReference type="Proteomes" id="UP000008824">
    <property type="component" value="Chromosome"/>
</dbReference>
<dbReference type="GO" id="GO:0036125">
    <property type="term" value="C:fatty acid beta-oxidation multienzyme complex"/>
    <property type="evidence" value="ECO:0007669"/>
    <property type="project" value="InterPro"/>
</dbReference>
<dbReference type="GO" id="GO:0008692">
    <property type="term" value="F:3-hydroxybutyryl-CoA epimerase activity"/>
    <property type="evidence" value="ECO:0007669"/>
    <property type="project" value="UniProtKB-UniRule"/>
</dbReference>
<dbReference type="GO" id="GO:0004165">
    <property type="term" value="F:delta(3)-delta(2)-enoyl-CoA isomerase activity"/>
    <property type="evidence" value="ECO:0007669"/>
    <property type="project" value="UniProtKB-UniRule"/>
</dbReference>
<dbReference type="GO" id="GO:0004300">
    <property type="term" value="F:enoyl-CoA hydratase activity"/>
    <property type="evidence" value="ECO:0007669"/>
    <property type="project" value="UniProtKB-UniRule"/>
</dbReference>
<dbReference type="GO" id="GO:0016509">
    <property type="term" value="F:long-chain-3-hydroxyacyl-CoA dehydrogenase activity"/>
    <property type="evidence" value="ECO:0007669"/>
    <property type="project" value="TreeGrafter"/>
</dbReference>
<dbReference type="GO" id="GO:0070403">
    <property type="term" value="F:NAD+ binding"/>
    <property type="evidence" value="ECO:0007669"/>
    <property type="project" value="InterPro"/>
</dbReference>
<dbReference type="GO" id="GO:0006635">
    <property type="term" value="P:fatty acid beta-oxidation"/>
    <property type="evidence" value="ECO:0007669"/>
    <property type="project" value="UniProtKB-UniRule"/>
</dbReference>
<dbReference type="CDD" id="cd06558">
    <property type="entry name" value="crotonase-like"/>
    <property type="match status" value="1"/>
</dbReference>
<dbReference type="FunFam" id="1.10.1040.50:FF:000001">
    <property type="entry name" value="Fatty acid oxidation complex subunit alpha"/>
    <property type="match status" value="1"/>
</dbReference>
<dbReference type="FunFam" id="3.90.226.10:FF:000018">
    <property type="entry name" value="Fatty acid oxidation complex subunit alpha"/>
    <property type="match status" value="1"/>
</dbReference>
<dbReference type="FunFam" id="3.40.50.720:FF:000009">
    <property type="entry name" value="Fatty oxidation complex, alpha subunit"/>
    <property type="match status" value="1"/>
</dbReference>
<dbReference type="Gene3D" id="1.10.1040.50">
    <property type="match status" value="1"/>
</dbReference>
<dbReference type="Gene3D" id="3.90.226.10">
    <property type="entry name" value="2-enoyl-CoA Hydratase, Chain A, domain 1"/>
    <property type="match status" value="1"/>
</dbReference>
<dbReference type="Gene3D" id="3.40.50.720">
    <property type="entry name" value="NAD(P)-binding Rossmann-like Domain"/>
    <property type="match status" value="1"/>
</dbReference>
<dbReference type="HAMAP" id="MF_01621">
    <property type="entry name" value="FadB"/>
    <property type="match status" value="1"/>
</dbReference>
<dbReference type="InterPro" id="IPR006180">
    <property type="entry name" value="3-OHacyl-CoA_DH_CS"/>
</dbReference>
<dbReference type="InterPro" id="IPR006176">
    <property type="entry name" value="3-OHacyl-CoA_DH_NAD-bd"/>
</dbReference>
<dbReference type="InterPro" id="IPR006108">
    <property type="entry name" value="3HC_DH_C"/>
</dbReference>
<dbReference type="InterPro" id="IPR008927">
    <property type="entry name" value="6-PGluconate_DH-like_C_sf"/>
</dbReference>
<dbReference type="InterPro" id="IPR029045">
    <property type="entry name" value="ClpP/crotonase-like_dom_sf"/>
</dbReference>
<dbReference type="InterPro" id="IPR018376">
    <property type="entry name" value="Enoyl-CoA_hyd/isom_CS"/>
</dbReference>
<dbReference type="InterPro" id="IPR001753">
    <property type="entry name" value="Enoyl-CoA_hydra/iso"/>
</dbReference>
<dbReference type="InterPro" id="IPR050136">
    <property type="entry name" value="FA_oxidation_alpha_subunit"/>
</dbReference>
<dbReference type="InterPro" id="IPR012799">
    <property type="entry name" value="FadB"/>
</dbReference>
<dbReference type="InterPro" id="IPR036291">
    <property type="entry name" value="NAD(P)-bd_dom_sf"/>
</dbReference>
<dbReference type="NCBIfam" id="TIGR02437">
    <property type="entry name" value="FadB"/>
    <property type="match status" value="1"/>
</dbReference>
<dbReference type="NCBIfam" id="NF008727">
    <property type="entry name" value="PRK11730.1"/>
    <property type="match status" value="1"/>
</dbReference>
<dbReference type="PANTHER" id="PTHR43612">
    <property type="entry name" value="TRIFUNCTIONAL ENZYME SUBUNIT ALPHA"/>
    <property type="match status" value="1"/>
</dbReference>
<dbReference type="PANTHER" id="PTHR43612:SF3">
    <property type="entry name" value="TRIFUNCTIONAL ENZYME SUBUNIT ALPHA, MITOCHONDRIAL"/>
    <property type="match status" value="1"/>
</dbReference>
<dbReference type="Pfam" id="PF00725">
    <property type="entry name" value="3HCDH"/>
    <property type="match status" value="2"/>
</dbReference>
<dbReference type="Pfam" id="PF02737">
    <property type="entry name" value="3HCDH_N"/>
    <property type="match status" value="1"/>
</dbReference>
<dbReference type="Pfam" id="PF00378">
    <property type="entry name" value="ECH_1"/>
    <property type="match status" value="1"/>
</dbReference>
<dbReference type="SUPFAM" id="SSF48179">
    <property type="entry name" value="6-phosphogluconate dehydrogenase C-terminal domain-like"/>
    <property type="match status" value="2"/>
</dbReference>
<dbReference type="SUPFAM" id="SSF52096">
    <property type="entry name" value="ClpP/crotonase"/>
    <property type="match status" value="1"/>
</dbReference>
<dbReference type="SUPFAM" id="SSF51735">
    <property type="entry name" value="NAD(P)-binding Rossmann-fold domains"/>
    <property type="match status" value="1"/>
</dbReference>
<dbReference type="PROSITE" id="PS00067">
    <property type="entry name" value="3HCDH"/>
    <property type="match status" value="1"/>
</dbReference>
<dbReference type="PROSITE" id="PS00166">
    <property type="entry name" value="ENOYL_COA_HYDRATASE"/>
    <property type="match status" value="1"/>
</dbReference>
<proteinExistence type="inferred from homology"/>
<gene>
    <name evidence="1" type="primary">fadB</name>
    <name type="ordered locus">SNSL254_A4262</name>
</gene>
<protein>
    <recommendedName>
        <fullName evidence="1">Fatty acid oxidation complex subunit alpha</fullName>
    </recommendedName>
    <domain>
        <recommendedName>
            <fullName evidence="1">Enoyl-CoA hydratase/Delta(3)-cis-Delta(2)-trans-enoyl-CoA isomerase/3-hydroxybutyryl-CoA epimerase</fullName>
            <ecNumber evidence="1">4.2.1.17</ecNumber>
            <ecNumber evidence="1">5.1.2.3</ecNumber>
            <ecNumber evidence="1">5.3.3.8</ecNumber>
        </recommendedName>
    </domain>
    <domain>
        <recommendedName>
            <fullName evidence="1">3-hydroxyacyl-CoA dehydrogenase</fullName>
            <ecNumber evidence="1">1.1.1.35</ecNumber>
        </recommendedName>
    </domain>
</protein>
<organism>
    <name type="scientific">Salmonella newport (strain SL254)</name>
    <dbReference type="NCBI Taxonomy" id="423368"/>
    <lineage>
        <taxon>Bacteria</taxon>
        <taxon>Pseudomonadati</taxon>
        <taxon>Pseudomonadota</taxon>
        <taxon>Gammaproteobacteria</taxon>
        <taxon>Enterobacterales</taxon>
        <taxon>Enterobacteriaceae</taxon>
        <taxon>Salmonella</taxon>
    </lineage>
</organism>
<evidence type="ECO:0000255" key="1">
    <source>
        <dbReference type="HAMAP-Rule" id="MF_01621"/>
    </source>
</evidence>
<evidence type="ECO:0000256" key="2">
    <source>
        <dbReference type="SAM" id="MobiDB-lite"/>
    </source>
</evidence>
<comment type="function">
    <text evidence="1">Involved in the aerobic and anaerobic degradation of long-chain fatty acids via beta-oxidation cycle. Catalyzes the formation of 3-oxoacyl-CoA from enoyl-CoA via L-3-hydroxyacyl-CoA. It can also use D-3-hydroxyacyl-CoA and cis-3-enoyl-CoA as substrate.</text>
</comment>
<comment type="catalytic activity">
    <reaction evidence="1">
        <text>a (3S)-3-hydroxyacyl-CoA + NAD(+) = a 3-oxoacyl-CoA + NADH + H(+)</text>
        <dbReference type="Rhea" id="RHEA:22432"/>
        <dbReference type="ChEBI" id="CHEBI:15378"/>
        <dbReference type="ChEBI" id="CHEBI:57318"/>
        <dbReference type="ChEBI" id="CHEBI:57540"/>
        <dbReference type="ChEBI" id="CHEBI:57945"/>
        <dbReference type="ChEBI" id="CHEBI:90726"/>
        <dbReference type="EC" id="1.1.1.35"/>
    </reaction>
</comment>
<comment type="catalytic activity">
    <reaction evidence="1">
        <text>a (3S)-3-hydroxyacyl-CoA = a (2E)-enoyl-CoA + H2O</text>
        <dbReference type="Rhea" id="RHEA:16105"/>
        <dbReference type="ChEBI" id="CHEBI:15377"/>
        <dbReference type="ChEBI" id="CHEBI:57318"/>
        <dbReference type="ChEBI" id="CHEBI:58856"/>
        <dbReference type="EC" id="4.2.1.17"/>
    </reaction>
</comment>
<comment type="catalytic activity">
    <reaction evidence="1">
        <text>a 4-saturated-(3S)-3-hydroxyacyl-CoA = a (3E)-enoyl-CoA + H2O</text>
        <dbReference type="Rhea" id="RHEA:20724"/>
        <dbReference type="ChEBI" id="CHEBI:15377"/>
        <dbReference type="ChEBI" id="CHEBI:58521"/>
        <dbReference type="ChEBI" id="CHEBI:137480"/>
        <dbReference type="EC" id="4.2.1.17"/>
    </reaction>
</comment>
<comment type="catalytic activity">
    <reaction evidence="1">
        <text>(3S)-3-hydroxybutanoyl-CoA = (3R)-3-hydroxybutanoyl-CoA</text>
        <dbReference type="Rhea" id="RHEA:21760"/>
        <dbReference type="ChEBI" id="CHEBI:57315"/>
        <dbReference type="ChEBI" id="CHEBI:57316"/>
        <dbReference type="EC" id="5.1.2.3"/>
    </reaction>
</comment>
<comment type="catalytic activity">
    <reaction evidence="1">
        <text>a (3Z)-enoyl-CoA = a 4-saturated (2E)-enoyl-CoA</text>
        <dbReference type="Rhea" id="RHEA:45900"/>
        <dbReference type="ChEBI" id="CHEBI:85097"/>
        <dbReference type="ChEBI" id="CHEBI:85489"/>
        <dbReference type="EC" id="5.3.3.8"/>
    </reaction>
</comment>
<comment type="catalytic activity">
    <reaction evidence="1">
        <text>a (3E)-enoyl-CoA = a 4-saturated (2E)-enoyl-CoA</text>
        <dbReference type="Rhea" id="RHEA:45228"/>
        <dbReference type="ChEBI" id="CHEBI:58521"/>
        <dbReference type="ChEBI" id="CHEBI:85097"/>
        <dbReference type="EC" id="5.3.3.8"/>
    </reaction>
</comment>
<comment type="pathway">
    <text evidence="1">Lipid metabolism; fatty acid beta-oxidation.</text>
</comment>
<comment type="subunit">
    <text evidence="1">Heterotetramer of two alpha chains (FadB) and two beta chains (FadA).</text>
</comment>
<comment type="similarity">
    <text evidence="1">In the N-terminal section; belongs to the enoyl-CoA hydratase/isomerase family.</text>
</comment>
<comment type="similarity">
    <text evidence="1">In the C-terminal section; belongs to the 3-hydroxyacyl-CoA dehydrogenase family.</text>
</comment>
<reference key="1">
    <citation type="journal article" date="2011" name="J. Bacteriol.">
        <title>Comparative genomics of 28 Salmonella enterica isolates: evidence for CRISPR-mediated adaptive sublineage evolution.</title>
        <authorList>
            <person name="Fricke W.F."/>
            <person name="Mammel M.K."/>
            <person name="McDermott P.F."/>
            <person name="Tartera C."/>
            <person name="White D.G."/>
            <person name="Leclerc J.E."/>
            <person name="Ravel J."/>
            <person name="Cebula T.A."/>
        </authorList>
    </citation>
    <scope>NUCLEOTIDE SEQUENCE [LARGE SCALE GENOMIC DNA]</scope>
    <source>
        <strain>SL254</strain>
    </source>
</reference>